<evidence type="ECO:0000255" key="1">
    <source>
        <dbReference type="HAMAP-Rule" id="MF_00439"/>
    </source>
</evidence>
<sequence length="173" mass="19974">MPRTQRNDNFIDKSFTVMADIILKMLPANKKAKEAFVYYRDGMSAQADGEYAEALDNYYEALTLEEDPNDRSYILYNIGIIHASNGEHEKALEYYEEAIQLNPRMPSALNNIAVIYHFQGEKAREDGQQAEAEALYDKAAEYWKQAIRLAPNNYIEAQNWLKITGRSEIDVFF</sequence>
<proteinExistence type="inferred from homology"/>
<comment type="function">
    <text evidence="1">Essential for the assembly of the photosystem I (PSI) complex. May act as a chaperone-like factor to guide the assembly of the PSI subunits.</text>
</comment>
<comment type="subcellular location">
    <subcellularLocation>
        <location evidence="1">Cellular thylakoid membrane</location>
        <topology evidence="1">Peripheral membrane protein</topology>
    </subcellularLocation>
</comment>
<comment type="similarity">
    <text evidence="1">Belongs to the Ycf3 family.</text>
</comment>
<protein>
    <recommendedName>
        <fullName evidence="1">Photosystem I assembly protein Ycf3</fullName>
    </recommendedName>
</protein>
<name>YCF3_MICAN</name>
<gene>
    <name evidence="1" type="primary">ycf3</name>
    <name type="ordered locus">MAE_49040</name>
</gene>
<keyword id="KW-0472">Membrane</keyword>
<keyword id="KW-0602">Photosynthesis</keyword>
<keyword id="KW-0677">Repeat</keyword>
<keyword id="KW-0793">Thylakoid</keyword>
<keyword id="KW-0802">TPR repeat</keyword>
<feature type="chain" id="PRO_1000200323" description="Photosystem I assembly protein Ycf3">
    <location>
        <begin position="1"/>
        <end position="173"/>
    </location>
</feature>
<feature type="repeat" description="TPR 1">
    <location>
        <begin position="35"/>
        <end position="68"/>
    </location>
</feature>
<feature type="repeat" description="TPR 2">
    <location>
        <begin position="72"/>
        <end position="105"/>
    </location>
</feature>
<feature type="repeat" description="TPR 3">
    <location>
        <begin position="120"/>
        <end position="153"/>
    </location>
</feature>
<dbReference type="EMBL" id="AP009552">
    <property type="protein sequence ID" value="BAG04726.1"/>
    <property type="molecule type" value="Genomic_DNA"/>
</dbReference>
<dbReference type="RefSeq" id="WP_002760118.1">
    <property type="nucleotide sequence ID" value="NC_010296.1"/>
</dbReference>
<dbReference type="SMR" id="B0JVY3"/>
<dbReference type="STRING" id="449447.MAE_49040"/>
<dbReference type="PaxDb" id="449447-MAE_49040"/>
<dbReference type="EnsemblBacteria" id="BAG04726">
    <property type="protein sequence ID" value="BAG04726"/>
    <property type="gene ID" value="MAE_49040"/>
</dbReference>
<dbReference type="KEGG" id="mar:MAE_49040"/>
<dbReference type="eggNOG" id="COG0457">
    <property type="taxonomic scope" value="Bacteria"/>
</dbReference>
<dbReference type="HOGENOM" id="CLU_141248_0_0_3"/>
<dbReference type="BioCyc" id="MAER449447:MAE_RS21300-MONOMER"/>
<dbReference type="Proteomes" id="UP000001510">
    <property type="component" value="Chromosome"/>
</dbReference>
<dbReference type="GO" id="GO:0031676">
    <property type="term" value="C:plasma membrane-derived thylakoid membrane"/>
    <property type="evidence" value="ECO:0007669"/>
    <property type="project" value="UniProtKB-SubCell"/>
</dbReference>
<dbReference type="GO" id="GO:0015979">
    <property type="term" value="P:photosynthesis"/>
    <property type="evidence" value="ECO:0007669"/>
    <property type="project" value="UniProtKB-UniRule"/>
</dbReference>
<dbReference type="Gene3D" id="1.25.40.10">
    <property type="entry name" value="Tetratricopeptide repeat domain"/>
    <property type="match status" value="1"/>
</dbReference>
<dbReference type="HAMAP" id="MF_00439">
    <property type="entry name" value="Ycf3"/>
    <property type="match status" value="1"/>
</dbReference>
<dbReference type="InterPro" id="IPR022818">
    <property type="entry name" value="PSI_Ycf3_assembly"/>
</dbReference>
<dbReference type="InterPro" id="IPR011990">
    <property type="entry name" value="TPR-like_helical_dom_sf"/>
</dbReference>
<dbReference type="InterPro" id="IPR019734">
    <property type="entry name" value="TPR_rpt"/>
</dbReference>
<dbReference type="InterPro" id="IPR051685">
    <property type="entry name" value="Ycf3/AcsC/BcsC/TPR_MFPF"/>
</dbReference>
<dbReference type="NCBIfam" id="NF002725">
    <property type="entry name" value="PRK02603.1"/>
    <property type="match status" value="1"/>
</dbReference>
<dbReference type="PANTHER" id="PTHR44943">
    <property type="entry name" value="CELLULOSE SYNTHASE OPERON PROTEIN C"/>
    <property type="match status" value="1"/>
</dbReference>
<dbReference type="PANTHER" id="PTHR44943:SF9">
    <property type="entry name" value="TPR-REPEAT-CONTAINING PROTEIN"/>
    <property type="match status" value="1"/>
</dbReference>
<dbReference type="Pfam" id="PF00515">
    <property type="entry name" value="TPR_1"/>
    <property type="match status" value="1"/>
</dbReference>
<dbReference type="SMART" id="SM00028">
    <property type="entry name" value="TPR"/>
    <property type="match status" value="3"/>
</dbReference>
<dbReference type="SUPFAM" id="SSF48452">
    <property type="entry name" value="TPR-like"/>
    <property type="match status" value="1"/>
</dbReference>
<dbReference type="PROSITE" id="PS50005">
    <property type="entry name" value="TPR"/>
    <property type="match status" value="3"/>
</dbReference>
<dbReference type="PROSITE" id="PS50293">
    <property type="entry name" value="TPR_REGION"/>
    <property type="match status" value="1"/>
</dbReference>
<organism>
    <name type="scientific">Microcystis aeruginosa (strain NIES-843 / IAM M-2473)</name>
    <dbReference type="NCBI Taxonomy" id="449447"/>
    <lineage>
        <taxon>Bacteria</taxon>
        <taxon>Bacillati</taxon>
        <taxon>Cyanobacteriota</taxon>
        <taxon>Cyanophyceae</taxon>
        <taxon>Oscillatoriophycideae</taxon>
        <taxon>Chroococcales</taxon>
        <taxon>Microcystaceae</taxon>
        <taxon>Microcystis</taxon>
    </lineage>
</organism>
<reference key="1">
    <citation type="journal article" date="2007" name="DNA Res.">
        <title>Complete genomic structure of the bloom-forming toxic cyanobacterium Microcystis aeruginosa NIES-843.</title>
        <authorList>
            <person name="Kaneko T."/>
            <person name="Nakajima N."/>
            <person name="Okamoto S."/>
            <person name="Suzuki I."/>
            <person name="Tanabe Y."/>
            <person name="Tamaoki M."/>
            <person name="Nakamura Y."/>
            <person name="Kasai F."/>
            <person name="Watanabe A."/>
            <person name="Kawashima K."/>
            <person name="Kishida Y."/>
            <person name="Ono A."/>
            <person name="Shimizu Y."/>
            <person name="Takahashi C."/>
            <person name="Minami C."/>
            <person name="Fujishiro T."/>
            <person name="Kohara M."/>
            <person name="Katoh M."/>
            <person name="Nakazaki N."/>
            <person name="Nakayama S."/>
            <person name="Yamada M."/>
            <person name="Tabata S."/>
            <person name="Watanabe M.M."/>
        </authorList>
    </citation>
    <scope>NUCLEOTIDE SEQUENCE [LARGE SCALE GENOMIC DNA]</scope>
    <source>
        <strain>NIES-843 / IAM M-247</strain>
    </source>
</reference>
<accession>B0JVY3</accession>